<accession>P9WGA4</accession>
<accession>L0TA55</accession>
<accession>O33214</accession>
<accession>P67177</accession>
<gene>
    <name type="ordered locus">MT2678</name>
</gene>
<protein>
    <recommendedName>
        <fullName evidence="1">Probable transcriptional regulatory protein MT2678</fullName>
    </recommendedName>
</protein>
<feature type="chain" id="PRO_0000428396" description="Probable transcriptional regulatory protein MT2678">
    <location>
        <begin position="1"/>
        <end position="251"/>
    </location>
</feature>
<reference key="1">
    <citation type="journal article" date="2002" name="J. Bacteriol.">
        <title>Whole-genome comparison of Mycobacterium tuberculosis clinical and laboratory strains.</title>
        <authorList>
            <person name="Fleischmann R.D."/>
            <person name="Alland D."/>
            <person name="Eisen J.A."/>
            <person name="Carpenter L."/>
            <person name="White O."/>
            <person name="Peterson J.D."/>
            <person name="DeBoy R.T."/>
            <person name="Dodson R.J."/>
            <person name="Gwinn M.L."/>
            <person name="Haft D.H."/>
            <person name="Hickey E.K."/>
            <person name="Kolonay J.F."/>
            <person name="Nelson W.C."/>
            <person name="Umayam L.A."/>
            <person name="Ermolaeva M.D."/>
            <person name="Salzberg S.L."/>
            <person name="Delcher A."/>
            <person name="Utterback T.R."/>
            <person name="Weidman J.F."/>
            <person name="Khouri H.M."/>
            <person name="Gill J."/>
            <person name="Mikula A."/>
            <person name="Bishai W."/>
            <person name="Jacobs W.R. Jr."/>
            <person name="Venter J.C."/>
            <person name="Fraser C.M."/>
        </authorList>
    </citation>
    <scope>NUCLEOTIDE SEQUENCE [LARGE SCALE GENOMIC DNA]</scope>
    <source>
        <strain>CDC 1551 / Oshkosh</strain>
    </source>
</reference>
<name>Y2603_MYCTO</name>
<sequence length="251" mass="26799">MSGHSKWATTKHKKAVVDARRGKMFARLIKNIEVAARVGGGDPAGNPTLYDAIQKAKKSSVPNENIERARKRGAGEEAGGADWQTIMYEGYAPNGVAVLIECLTDNRNRAASEVRVAMTRNGGTMADPGSVSYLFSRKGVVTLEKNGLTEDDVLAAVLEAGAEDVNDLGDSFEVISEPAELVAVRSALQDAGIDYESAEASFQPSVSVPVDLDGARKVFKLVDALEDSDDVQNVWTNVDVSDEVLAALDDE</sequence>
<evidence type="ECO:0000255" key="1">
    <source>
        <dbReference type="HAMAP-Rule" id="MF_00693"/>
    </source>
</evidence>
<organism>
    <name type="scientific">Mycobacterium tuberculosis (strain CDC 1551 / Oshkosh)</name>
    <dbReference type="NCBI Taxonomy" id="83331"/>
    <lineage>
        <taxon>Bacteria</taxon>
        <taxon>Bacillati</taxon>
        <taxon>Actinomycetota</taxon>
        <taxon>Actinomycetes</taxon>
        <taxon>Mycobacteriales</taxon>
        <taxon>Mycobacteriaceae</taxon>
        <taxon>Mycobacterium</taxon>
        <taxon>Mycobacterium tuberculosis complex</taxon>
    </lineage>
</organism>
<keyword id="KW-0963">Cytoplasm</keyword>
<keyword id="KW-0238">DNA-binding</keyword>
<keyword id="KW-1185">Reference proteome</keyword>
<keyword id="KW-0804">Transcription</keyword>
<keyword id="KW-0805">Transcription regulation</keyword>
<comment type="subcellular location">
    <subcellularLocation>
        <location evidence="1">Cytoplasm</location>
    </subcellularLocation>
</comment>
<comment type="similarity">
    <text evidence="1">Belongs to the TACO1 family.</text>
</comment>
<dbReference type="EMBL" id="AE000516">
    <property type="protein sequence ID" value="AAK46994.1"/>
    <property type="molecule type" value="Genomic_DNA"/>
</dbReference>
<dbReference type="PIR" id="F70500">
    <property type="entry name" value="F70500"/>
</dbReference>
<dbReference type="RefSeq" id="WP_003413464.1">
    <property type="nucleotide sequence ID" value="NZ_KK341227.1"/>
</dbReference>
<dbReference type="SMR" id="P9WGA4"/>
<dbReference type="KEGG" id="mtc:MT2678"/>
<dbReference type="PATRIC" id="fig|83331.31.peg.2888"/>
<dbReference type="HOGENOM" id="CLU_062974_2_2_11"/>
<dbReference type="Proteomes" id="UP000001020">
    <property type="component" value="Chromosome"/>
</dbReference>
<dbReference type="GO" id="GO:0005829">
    <property type="term" value="C:cytosol"/>
    <property type="evidence" value="ECO:0007669"/>
    <property type="project" value="TreeGrafter"/>
</dbReference>
<dbReference type="GO" id="GO:0003677">
    <property type="term" value="F:DNA binding"/>
    <property type="evidence" value="ECO:0007669"/>
    <property type="project" value="UniProtKB-UniRule"/>
</dbReference>
<dbReference type="GO" id="GO:0006355">
    <property type="term" value="P:regulation of DNA-templated transcription"/>
    <property type="evidence" value="ECO:0007669"/>
    <property type="project" value="UniProtKB-UniRule"/>
</dbReference>
<dbReference type="FunFam" id="1.10.10.200:FF:000002">
    <property type="entry name" value="Probable transcriptional regulatory protein CLM62_37755"/>
    <property type="match status" value="1"/>
</dbReference>
<dbReference type="FunFam" id="3.30.70.980:FF:000006">
    <property type="entry name" value="Probable transcriptional regulatory protein J113_18170"/>
    <property type="match status" value="1"/>
</dbReference>
<dbReference type="Gene3D" id="1.10.10.200">
    <property type="match status" value="1"/>
</dbReference>
<dbReference type="Gene3D" id="3.30.70.980">
    <property type="match status" value="2"/>
</dbReference>
<dbReference type="HAMAP" id="MF_00693">
    <property type="entry name" value="Transcrip_reg_TACO1"/>
    <property type="match status" value="1"/>
</dbReference>
<dbReference type="InterPro" id="IPR017856">
    <property type="entry name" value="Integrase-like_N"/>
</dbReference>
<dbReference type="InterPro" id="IPR048300">
    <property type="entry name" value="TACO1_YebC-like_2nd/3rd_dom"/>
</dbReference>
<dbReference type="InterPro" id="IPR049083">
    <property type="entry name" value="TACO1_YebC_N"/>
</dbReference>
<dbReference type="InterPro" id="IPR002876">
    <property type="entry name" value="Transcrip_reg_TACO1-like"/>
</dbReference>
<dbReference type="InterPro" id="IPR026564">
    <property type="entry name" value="Transcrip_reg_TACO1-like_dom3"/>
</dbReference>
<dbReference type="InterPro" id="IPR029072">
    <property type="entry name" value="YebC-like"/>
</dbReference>
<dbReference type="NCBIfam" id="NF001030">
    <property type="entry name" value="PRK00110.1"/>
    <property type="match status" value="1"/>
</dbReference>
<dbReference type="NCBIfam" id="NF009044">
    <property type="entry name" value="PRK12378.1"/>
    <property type="match status" value="1"/>
</dbReference>
<dbReference type="NCBIfam" id="TIGR01033">
    <property type="entry name" value="YebC/PmpR family DNA-binding transcriptional regulator"/>
    <property type="match status" value="1"/>
</dbReference>
<dbReference type="PANTHER" id="PTHR12532:SF6">
    <property type="entry name" value="TRANSCRIPTIONAL REGULATORY PROTEIN YEBC-RELATED"/>
    <property type="match status" value="1"/>
</dbReference>
<dbReference type="PANTHER" id="PTHR12532">
    <property type="entry name" value="TRANSLATIONAL ACTIVATOR OF CYTOCHROME C OXIDASE 1"/>
    <property type="match status" value="1"/>
</dbReference>
<dbReference type="Pfam" id="PF20772">
    <property type="entry name" value="TACO1_YebC_N"/>
    <property type="match status" value="1"/>
</dbReference>
<dbReference type="Pfam" id="PF01709">
    <property type="entry name" value="Transcrip_reg"/>
    <property type="match status" value="1"/>
</dbReference>
<dbReference type="SUPFAM" id="SSF75625">
    <property type="entry name" value="YebC-like"/>
    <property type="match status" value="1"/>
</dbReference>
<proteinExistence type="inferred from homology"/>